<reference evidence="5 6" key="1">
    <citation type="journal article" date="2009" name="Biol. Reprod.">
        <title>A novel, single, transmembrane protein CATSPERG is associated with CATSPER1 channel protein.</title>
        <authorList>
            <person name="Wang H."/>
            <person name="Liu J."/>
            <person name="Cho K.-H."/>
            <person name="Ren D."/>
        </authorList>
    </citation>
    <scope>NUCLEOTIDE SEQUENCE [MRNA]</scope>
    <scope>FUNCTION</scope>
    <scope>IDENTIFICATION BY MASS SPECTROMETRY</scope>
    <scope>IDENTIFICATION IN A COMPLEX WITH CATSPER1; CATSPERB AND HSPA1B</scope>
    <scope>TISSUE SPECIFICITY</scope>
    <source>
        <strain evidence="6">BALB/cJ</strain>
        <tissue evidence="6">Testis</tissue>
    </source>
</reference>
<reference evidence="5" key="2">
    <citation type="journal article" date="2009" name="PLoS Biol.">
        <title>Lineage-specific biology revealed by a finished genome assembly of the mouse.</title>
        <authorList>
            <person name="Church D.M."/>
            <person name="Goodstadt L."/>
            <person name="Hillier L.W."/>
            <person name="Zody M.C."/>
            <person name="Goldstein S."/>
            <person name="She X."/>
            <person name="Bult C.J."/>
            <person name="Agarwala R."/>
            <person name="Cherry J.L."/>
            <person name="DiCuccio M."/>
            <person name="Hlavina W."/>
            <person name="Kapustin Y."/>
            <person name="Meric P."/>
            <person name="Maglott D."/>
            <person name="Birtle Z."/>
            <person name="Marques A.C."/>
            <person name="Graves T."/>
            <person name="Zhou S."/>
            <person name="Teague B."/>
            <person name="Potamousis K."/>
            <person name="Churas C."/>
            <person name="Place M."/>
            <person name="Herschleb J."/>
            <person name="Runnheim R."/>
            <person name="Forrest D."/>
            <person name="Amos-Landgraf J."/>
            <person name="Schwartz D.C."/>
            <person name="Cheng Z."/>
            <person name="Lindblad-Toh K."/>
            <person name="Eichler E.E."/>
            <person name="Ponting C.P."/>
        </authorList>
    </citation>
    <scope>NUCLEOTIDE SEQUENCE [LARGE SCALE GENOMIC DNA]</scope>
    <source>
        <strain>C57BL/6J</strain>
    </source>
</reference>
<reference key="3">
    <citation type="journal article" date="2011" name="Nat. Commun.">
        <title>A novel gene required for male fertility and functional CATSPER channel formation in spermatozoa.</title>
        <authorList>
            <person name="Chung J.J."/>
            <person name="Navarro B."/>
            <person name="Krapivinsky G."/>
            <person name="Krapivinsky L."/>
            <person name="Clapham D.E."/>
        </authorList>
    </citation>
    <scope>IDENTIFICATION IN THE CATSPER COMPLEX</scope>
    <source>
        <strain>C57BL/6J</strain>
    </source>
</reference>
<reference key="4">
    <citation type="journal article" date="2021" name="Nature">
        <title>Structure of a mammalian sperm cation channel complex.</title>
        <authorList>
            <person name="Lin S."/>
            <person name="Ke M."/>
            <person name="Zhang Y."/>
            <person name="Yan Z."/>
            <person name="Wu J."/>
        </authorList>
    </citation>
    <scope>STRUCTURE BY ELECTRON MICROSCOPY (2.9 ANGSTROMS) OF THE CATSPER COMPLEX</scope>
    <scope>IDENTIFICATION BY MASS SPECTROMETRY</scope>
    <scope>FUNCTION</scope>
    <scope>TRANSMEMBRANE DOMAIN</scope>
    <scope>TOPOLOGY</scope>
    <scope>DISULFIDE BONDS</scope>
    <scope>GLYCOSYLATION AT ASN-103; ASN-178; ASN-356; ASN-402 AND ASN-672</scope>
</reference>
<accession>C6KI89</accession>
<name>CTSG2_MOUSE</name>
<keyword id="KW-0002">3D-structure</keyword>
<keyword id="KW-1003">Cell membrane</keyword>
<keyword id="KW-0966">Cell projection</keyword>
<keyword id="KW-0969">Cilium</keyword>
<keyword id="KW-0217">Developmental protein</keyword>
<keyword id="KW-0221">Differentiation</keyword>
<keyword id="KW-1015">Disulfide bond</keyword>
<keyword id="KW-0282">Flagellum</keyword>
<keyword id="KW-0325">Glycoprotein</keyword>
<keyword id="KW-0472">Membrane</keyword>
<keyword id="KW-1185">Reference proteome</keyword>
<keyword id="KW-0732">Signal</keyword>
<keyword id="KW-0744">Spermatogenesis</keyword>
<keyword id="KW-0812">Transmembrane</keyword>
<keyword id="KW-1133">Transmembrane helix</keyword>
<organism>
    <name type="scientific">Mus musculus</name>
    <name type="common">Mouse</name>
    <dbReference type="NCBI Taxonomy" id="10090"/>
    <lineage>
        <taxon>Eukaryota</taxon>
        <taxon>Metazoa</taxon>
        <taxon>Chordata</taxon>
        <taxon>Craniata</taxon>
        <taxon>Vertebrata</taxon>
        <taxon>Euteleostomi</taxon>
        <taxon>Mammalia</taxon>
        <taxon>Eutheria</taxon>
        <taxon>Euarchontoglires</taxon>
        <taxon>Glires</taxon>
        <taxon>Rodentia</taxon>
        <taxon>Myomorpha</taxon>
        <taxon>Muroidea</taxon>
        <taxon>Muridae</taxon>
        <taxon>Murinae</taxon>
        <taxon>Mus</taxon>
        <taxon>Mus</taxon>
    </lineage>
</organism>
<protein>
    <recommendedName>
        <fullName evidence="7">Cation channel sperm-associated auxiliary subunit gamma 2</fullName>
    </recommendedName>
</protein>
<dbReference type="EMBL" id="GQ225581">
    <property type="protein sequence ID" value="ACT09363.1"/>
    <property type="molecule type" value="mRNA"/>
</dbReference>
<dbReference type="EMBL" id="AC112789">
    <property type="status" value="NOT_ANNOTATED_CDS"/>
    <property type="molecule type" value="Genomic_DNA"/>
</dbReference>
<dbReference type="CCDS" id="CCDS52173.1"/>
<dbReference type="RefSeq" id="NP_083990.2">
    <property type="nucleotide sequence ID" value="NM_029714.4"/>
</dbReference>
<dbReference type="RefSeq" id="XP_006540475.1">
    <property type="nucleotide sequence ID" value="XM_006540412.2"/>
</dbReference>
<dbReference type="RefSeq" id="XP_017167870.1">
    <property type="nucleotide sequence ID" value="XM_017312381.3"/>
</dbReference>
<dbReference type="PDB" id="7EEB">
    <property type="method" value="EM"/>
    <property type="resolution" value="2.90 A"/>
    <property type="chains" value="F=1-1145"/>
</dbReference>
<dbReference type="PDBsum" id="7EEB"/>
<dbReference type="EMDB" id="EMD-31076"/>
<dbReference type="SMR" id="C6KI89"/>
<dbReference type="BioGRID" id="218276">
    <property type="interactions" value="4"/>
</dbReference>
<dbReference type="ComplexPortal" id="CPX-9078">
    <property type="entry name" value="CatSpermasome complex, gamma subunit variant 2"/>
</dbReference>
<dbReference type="CORUM" id="C6KI89"/>
<dbReference type="FunCoup" id="C6KI89">
    <property type="interactions" value="26"/>
</dbReference>
<dbReference type="STRING" id="10090.ENSMUSP00000052285"/>
<dbReference type="TCDB" id="1.A.1.19.3">
    <property type="family name" value="the voltage-gated ion channel (vic) superfamily"/>
</dbReference>
<dbReference type="GlyCosmos" id="C6KI89">
    <property type="glycosylation" value="7 sites, No reported glycans"/>
</dbReference>
<dbReference type="GlyGen" id="C6KI89">
    <property type="glycosylation" value="7 sites"/>
</dbReference>
<dbReference type="iPTMnet" id="C6KI89"/>
<dbReference type="PhosphoSitePlus" id="C6KI89"/>
<dbReference type="PaxDb" id="10090-ENSMUSP00000052285"/>
<dbReference type="ProteomicsDB" id="279289"/>
<dbReference type="Ensembl" id="ENSMUST00000061193.4">
    <property type="protein sequence ID" value="ENSMUSP00000052285.4"/>
    <property type="gene ID" value="ENSMUSG00000049123.11"/>
</dbReference>
<dbReference type="Ensembl" id="ENSMUST00000209126.2">
    <property type="protein sequence ID" value="ENSMUSP00000147099.2"/>
    <property type="gene ID" value="ENSMUSG00000049123.11"/>
</dbReference>
<dbReference type="GeneID" id="76718"/>
<dbReference type="KEGG" id="mmu:76718"/>
<dbReference type="UCSC" id="uc012fhg.1">
    <property type="organism name" value="mouse"/>
</dbReference>
<dbReference type="AGR" id="MGI:1923968"/>
<dbReference type="CTD" id="76718"/>
<dbReference type="MGI" id="MGI:1923968">
    <property type="gene designation" value="Catsperg2"/>
</dbReference>
<dbReference type="VEuPathDB" id="HostDB:ENSMUSG00000049123"/>
<dbReference type="eggNOG" id="ENOG502QWAR">
    <property type="taxonomic scope" value="Eukaryota"/>
</dbReference>
<dbReference type="GeneTree" id="ENSGT00390000014139"/>
<dbReference type="HOGENOM" id="CLU_010744_0_0_1"/>
<dbReference type="InParanoid" id="C6KI89"/>
<dbReference type="OMA" id="MQXWLCL"/>
<dbReference type="OrthoDB" id="9949093at2759"/>
<dbReference type="PhylomeDB" id="C6KI89"/>
<dbReference type="TreeFam" id="TF337337"/>
<dbReference type="BioGRID-ORCS" id="76718">
    <property type="hits" value="1 hit in 61 CRISPR screens"/>
</dbReference>
<dbReference type="ChiTaRS" id="Catsperg1">
    <property type="organism name" value="mouse"/>
</dbReference>
<dbReference type="PRO" id="PR:C6KI89"/>
<dbReference type="Proteomes" id="UP000000589">
    <property type="component" value="Chromosome 7"/>
</dbReference>
<dbReference type="RNAct" id="C6KI89">
    <property type="molecule type" value="protein"/>
</dbReference>
<dbReference type="Bgee" id="ENSMUSG00000049123">
    <property type="expression patterns" value="Expressed in spermatocyte and 10 other cell types or tissues"/>
</dbReference>
<dbReference type="ExpressionAtlas" id="C6KI89">
    <property type="expression patterns" value="baseline and differential"/>
</dbReference>
<dbReference type="GO" id="GO:0036128">
    <property type="term" value="C:CatSper complex"/>
    <property type="evidence" value="ECO:0000314"/>
    <property type="project" value="UniProtKB"/>
</dbReference>
<dbReference type="GO" id="GO:0031514">
    <property type="term" value="C:motile cilium"/>
    <property type="evidence" value="ECO:0000314"/>
    <property type="project" value="MGI"/>
</dbReference>
<dbReference type="GO" id="GO:0097228">
    <property type="term" value="C:sperm principal piece"/>
    <property type="evidence" value="ECO:0007669"/>
    <property type="project" value="InterPro"/>
</dbReference>
<dbReference type="GO" id="GO:0030154">
    <property type="term" value="P:cell differentiation"/>
    <property type="evidence" value="ECO:0007669"/>
    <property type="project" value="UniProtKB-KW"/>
</dbReference>
<dbReference type="GO" id="GO:0007283">
    <property type="term" value="P:spermatogenesis"/>
    <property type="evidence" value="ECO:0007669"/>
    <property type="project" value="UniProtKB-KW"/>
</dbReference>
<dbReference type="InterPro" id="IPR028246">
    <property type="entry name" value="CATSPERG"/>
</dbReference>
<dbReference type="InterPro" id="IPR053871">
    <property type="entry name" value="CATSPERG_b-prop"/>
</dbReference>
<dbReference type="InterPro" id="IPR053873">
    <property type="entry name" value="CATSPERG_C"/>
</dbReference>
<dbReference type="InterPro" id="IPR053874">
    <property type="entry name" value="CATSPERG_Ig-like"/>
</dbReference>
<dbReference type="InterPro" id="IPR053872">
    <property type="entry name" value="CATSPERG_N"/>
</dbReference>
<dbReference type="PANTHER" id="PTHR14327:SF1">
    <property type="entry name" value="CATION CHANNEL SPERM-ASSOCIATED AUXILIARY SUBUNIT GAMMA"/>
    <property type="match status" value="1"/>
</dbReference>
<dbReference type="PANTHER" id="PTHR14327">
    <property type="entry name" value="CATION CHANNEL SPERM-ASSOCIATED PROTEIN SUBUNIT GAMMA"/>
    <property type="match status" value="1"/>
</dbReference>
<dbReference type="Pfam" id="PF15064">
    <property type="entry name" value="CATSPERG_beta-prop"/>
    <property type="match status" value="1"/>
</dbReference>
<dbReference type="Pfam" id="PF22846">
    <property type="entry name" value="CATSPERG_C"/>
    <property type="match status" value="1"/>
</dbReference>
<dbReference type="Pfam" id="PF22851">
    <property type="entry name" value="CATSPERG_Ig-like"/>
    <property type="match status" value="1"/>
</dbReference>
<dbReference type="Pfam" id="PF22840">
    <property type="entry name" value="CATSPERG_NTD"/>
    <property type="match status" value="1"/>
</dbReference>
<sequence length="1145" mass="131417">MVSRPAMSPVSPVWPRKPNLWAFWVLRLVLLLSLKSWAEDALQHCTWLLVLNKFEKVGLHLSKDRFQDHEPIDTVAKVFQKLTDSPIDPSENYLSFPYYLQINFSCPGQNIEELARKGHLMGMKPMVQINYMYSVNFYRWEMENVQILMEAAPMRSTGYCPAEAMCVLNWYTPMPFKNGSVVSSVDIYTNGIGPFVSKKRFYVNMNGFLKRDASGKSLFAIGYESLVLKSSHFRLSKSRPLWYTVNHAPVFILGGFYDEKSILFSDSNFQDYVLLELSIDSCWVGSFYCPILGFSATIHDAIATESTLFIRQNQLVYYFTGTYITLFDKSHGSSRWVRVLPSECIKRLCPVYASGNGSEYVLALTTGKNEGYIHIGTITDGLVSFEMVPDGWSVCEKLPGKNCSIDWATYIADERNLLLLVKIDSGQFYLVNFNTEFKTLNILYKIPEFIPEAKELDFLVLLDTVTYTNTPMTPKGLFFNTLNNMLYIWGNFILQSYNREEFIFLADFPKESTIKYMVNSFKGQMAVVTENEEIWYFLEGGYDVYQVVPSQGWETYHNLQKMQKSSFHSEDESLVSLFFEDGKLFQLVYLFDVGKERLVKRLLPVGTLMEYNLPKPFTVVNQGNYQAISFTHTCPFKEIHLIDVPKKHHASRTESYVALPPLVSESLGFHNNNTLAVYQGLVYYLLWLHSKYDKPYADPVHDPTWRWWQHKTKDKDYFFYLFSNRLAAEGIYINMNAYQKLYNMSGDYGIPDLFFLDKGNWFTITVVLLSHQDTFTSSDSQGPTINVDKKLAIAVTIADPECLSVTVTQDVLLNRNAVINKIKVIDKKRCSEQGMIGRNIKKTSMMLKVLGAPGNCIQRTYLGGIIQGFKVVPIFIGCPPGKRLAFDVSYTIMHSEEINKHYFDCVIKDAEMPCFLFRDLFQPFFLVQDLVTGDSGSFLGSYVLKVVGGGRTLNTIRDYTEEEIFRYNSPLDTTNSLIWKTKVERTTEDKKFYIMSHESPGVEWLCLENSPCYDIIPQSIYPPEFFFKLLVSNRGVDNSTYCDYKLTFIVHIHGLPLSSKRTSFIVMVSTSFFIALVVFYILFCLVWPHIVKAWVSLRWRINNIMASESYYTYASSTAGFSLQSHSFEGPSRAGSKEDNVQAKTA</sequence>
<gene>
    <name evidence="7" type="primary">Catsperg2</name>
    <name type="synonym">Catsperg</name>
</gene>
<proteinExistence type="evidence at protein level"/>
<comment type="function">
    <text evidence="2 4">Auxiliary component of the CatSper complex, a complex involved in sperm cell hyperactivation (PubMed:19516020, PubMed:34225353). Sperm cell hyperactivation is needed for sperm motility which is essential late in the preparation of sperm for fertilization (PubMed:19516020).</text>
</comment>
<comment type="subunit">
    <text evidence="2 3 4 5">Component of the CatSper complex or CatSpermasome composed of the core pore-forming members CATSPER1, CATSPER2, CATSPER3 and CATSPER4 as well as auxiliary members CATSPERB, CATSPERG2, CATSPERD, CATSPERE, CATSPERZ, C2CD6/CATSPERT, SLCO6C1, TMEM249, TMEM262 and EFCAB9 (PubMed:19516020, PubMed:21224844, PubMed:34225353). HSPA1 may be an additional auxiliary complex member (PubMed:19516020). The core complex members CATSPER1, CATSPER2, CATSPER3 and CATSPER4 form a heterotetrameric channel (PubMed:34225353). The auxiliary CATSPERB, CATSPERG2, CATSPERD and CATSPERE subunits form a pavilion-like structure over the pore which stabilizes the complex through interactions with CATSPER4, CATSPER3, CATSPER1 and CATSPER2 respectively (PubMed:34225353). SLCO6C1 interacts with CATSPERE and TMEM262/CATSPERH interacts with CATSPERB, further stabilizing the complex (PubMed:34225353). C2CD6/CATSPERT interacts at least with CATSPERD and is required for targeting the CatSper complex in the flagellar membrane (Probable).</text>
</comment>
<comment type="subcellular location">
    <subcellularLocation>
        <location evidence="5">Cell projection</location>
        <location evidence="5">Cilium</location>
        <location evidence="5">Flagellum membrane</location>
        <topology evidence="1">Single-pass type I membrane protein</topology>
    </subcellularLocation>
</comment>
<comment type="tissue specificity">
    <text evidence="2">Testis-specific. Specifically expressed in the principal piece of the sperm tail (at protein level). Expressed in spermatocytes and spermatids within the seminiferous tubule but not in interstitial cells.</text>
</comment>
<comment type="miscellaneous">
    <text>Catsperg2 is absent in sperm from mice lacking Catsper1, suggesting that stable expression requires Catsper1.</text>
</comment>
<comment type="similarity">
    <text evidence="5">Belongs to the CATSPERG family.</text>
</comment>
<evidence type="ECO:0000255" key="1"/>
<evidence type="ECO:0000269" key="2">
    <source>
    </source>
</evidence>
<evidence type="ECO:0000269" key="3">
    <source>
    </source>
</evidence>
<evidence type="ECO:0000269" key="4">
    <source>
    </source>
</evidence>
<evidence type="ECO:0000305" key="5"/>
<evidence type="ECO:0000312" key="6">
    <source>
        <dbReference type="EMBL" id="ACT09363.1"/>
    </source>
</evidence>
<evidence type="ECO:0000312" key="7">
    <source>
        <dbReference type="MGI" id="MGI:1923968"/>
    </source>
</evidence>
<evidence type="ECO:0007744" key="8">
    <source>
        <dbReference type="PDB" id="7EEB"/>
    </source>
</evidence>
<evidence type="ECO:0007829" key="9">
    <source>
        <dbReference type="PDB" id="7EEB"/>
    </source>
</evidence>
<feature type="signal peptide" evidence="1">
    <location>
        <begin position="1"/>
        <end position="38"/>
    </location>
</feature>
<feature type="chain" id="PRO_0000388712" description="Cation channel sperm-associated auxiliary subunit gamma 2">
    <location>
        <begin position="39"/>
        <end position="1145"/>
    </location>
</feature>
<feature type="topological domain" description="Extracellular" evidence="4">
    <location>
        <begin position="39"/>
        <end position="1061"/>
    </location>
</feature>
<feature type="transmembrane region" description="Helical" evidence="4">
    <location>
        <begin position="1062"/>
        <end position="1083"/>
    </location>
</feature>
<feature type="topological domain" description="Cytoplasmic" evidence="4">
    <location>
        <begin position="1084"/>
        <end position="1145"/>
    </location>
</feature>
<feature type="glycosylation site" description="N-linked (GlcNAc...) asparagine" evidence="4">
    <location>
        <position position="103"/>
    </location>
</feature>
<feature type="glycosylation site" description="N-linked (GlcNAc...) asparagine" evidence="4">
    <location>
        <position position="178"/>
    </location>
</feature>
<feature type="glycosylation site" description="N-linked (GlcNAc...) asparagine" evidence="4">
    <location>
        <position position="356"/>
    </location>
</feature>
<feature type="glycosylation site" description="N-linked (GlcNAc...) asparagine" evidence="4">
    <location>
        <position position="402"/>
    </location>
</feature>
<feature type="glycosylation site" description="N-linked (GlcNAc...) asparagine" evidence="4">
    <location>
        <position position="672"/>
    </location>
</feature>
<feature type="glycosylation site" description="N-linked (GlcNAc...) asparagine" evidence="1">
    <location>
        <position position="743"/>
    </location>
</feature>
<feature type="glycosylation site" description="N-linked (GlcNAc...) asparagine" evidence="1">
    <location>
        <position position="1038"/>
    </location>
</feature>
<feature type="disulfide bond" evidence="4 8">
    <location>
        <begin position="45"/>
        <end position="106"/>
    </location>
</feature>
<feature type="disulfide bond" evidence="4 8">
    <location>
        <begin position="160"/>
        <end position="166"/>
    </location>
</feature>
<feature type="disulfide bond" evidence="4 8">
    <location>
        <begin position="289"/>
        <end position="344"/>
    </location>
</feature>
<feature type="disulfide bond" evidence="4 8">
    <location>
        <begin position="395"/>
        <end position="403"/>
    </location>
</feature>
<feature type="disulfide bond" evidence="4 8">
    <location>
        <begin position="634"/>
        <end position="856"/>
    </location>
</feature>
<feature type="disulfide bond" evidence="4 8">
    <location>
        <begin position="802"/>
        <end position="830"/>
    </location>
</feature>
<feature type="disulfide bond" evidence="4 8">
    <location>
        <begin position="878"/>
        <end position="1042"/>
    </location>
</feature>
<feature type="disulfide bond" evidence="4 8">
    <location>
        <begin position="905"/>
        <end position="914"/>
    </location>
</feature>
<feature type="disulfide bond" evidence="4 8">
    <location>
        <begin position="1006"/>
        <end position="1012"/>
    </location>
</feature>
<feature type="strand" evidence="9">
    <location>
        <begin position="46"/>
        <end position="52"/>
    </location>
</feature>
<feature type="turn" evidence="9">
    <location>
        <begin position="55"/>
        <end position="59"/>
    </location>
</feature>
<feature type="helix" evidence="9">
    <location>
        <begin position="76"/>
        <end position="81"/>
    </location>
</feature>
<feature type="strand" evidence="9">
    <location>
        <begin position="84"/>
        <end position="86"/>
    </location>
</feature>
<feature type="strand" evidence="9">
    <location>
        <begin position="99"/>
        <end position="105"/>
    </location>
</feature>
<feature type="helix" evidence="9">
    <location>
        <begin position="111"/>
        <end position="120"/>
    </location>
</feature>
<feature type="strand" evidence="9">
    <location>
        <begin position="126"/>
        <end position="132"/>
    </location>
</feature>
<feature type="turn" evidence="9">
    <location>
        <begin position="137"/>
        <end position="139"/>
    </location>
</feature>
<feature type="strand" evidence="9">
    <location>
        <begin position="144"/>
        <end position="150"/>
    </location>
</feature>
<feature type="strand" evidence="9">
    <location>
        <begin position="152"/>
        <end position="155"/>
    </location>
</feature>
<feature type="strand" evidence="9">
    <location>
        <begin position="161"/>
        <end position="164"/>
    </location>
</feature>
<feature type="strand" evidence="9">
    <location>
        <begin position="167"/>
        <end position="173"/>
    </location>
</feature>
<feature type="strand" evidence="9">
    <location>
        <begin position="182"/>
        <end position="188"/>
    </location>
</feature>
<feature type="strand" evidence="9">
    <location>
        <begin position="191"/>
        <end position="194"/>
    </location>
</feature>
<feature type="strand" evidence="9">
    <location>
        <begin position="199"/>
        <end position="202"/>
    </location>
</feature>
<feature type="strand" evidence="9">
    <location>
        <begin position="208"/>
        <end position="210"/>
    </location>
</feature>
<feature type="strand" evidence="9">
    <location>
        <begin position="218"/>
        <end position="223"/>
    </location>
</feature>
<feature type="helix" evidence="9">
    <location>
        <begin position="230"/>
        <end position="234"/>
    </location>
</feature>
<feature type="turn" evidence="9">
    <location>
        <begin position="245"/>
        <end position="247"/>
    </location>
</feature>
<feature type="strand" evidence="9">
    <location>
        <begin position="250"/>
        <end position="253"/>
    </location>
</feature>
<feature type="strand" evidence="9">
    <location>
        <begin position="259"/>
        <end position="266"/>
    </location>
</feature>
<feature type="turn" evidence="9">
    <location>
        <begin position="267"/>
        <end position="270"/>
    </location>
</feature>
<feature type="strand" evidence="9">
    <location>
        <begin position="273"/>
        <end position="277"/>
    </location>
</feature>
<feature type="strand" evidence="9">
    <location>
        <begin position="287"/>
        <end position="289"/>
    </location>
</feature>
<feature type="strand" evidence="9">
    <location>
        <begin position="299"/>
        <end position="304"/>
    </location>
</feature>
<feature type="strand" evidence="9">
    <location>
        <begin position="307"/>
        <end position="312"/>
    </location>
</feature>
<feature type="strand" evidence="9">
    <location>
        <begin position="315"/>
        <end position="320"/>
    </location>
</feature>
<feature type="turn" evidence="9">
    <location>
        <begin position="324"/>
        <end position="326"/>
    </location>
</feature>
<feature type="strand" evidence="9">
    <location>
        <begin position="337"/>
        <end position="339"/>
    </location>
</feature>
<feature type="strand" evidence="9">
    <location>
        <begin position="341"/>
        <end position="343"/>
    </location>
</feature>
<feature type="strand" evidence="9">
    <location>
        <begin position="345"/>
        <end position="350"/>
    </location>
</feature>
<feature type="strand" evidence="9">
    <location>
        <begin position="359"/>
        <end position="365"/>
    </location>
</feature>
<feature type="strand" evidence="9">
    <location>
        <begin position="367"/>
        <end position="369"/>
    </location>
</feature>
<feature type="strand" evidence="9">
    <location>
        <begin position="373"/>
        <end position="379"/>
    </location>
</feature>
<feature type="strand" evidence="9">
    <location>
        <begin position="382"/>
        <end position="387"/>
    </location>
</feature>
<feature type="turn" evidence="9">
    <location>
        <begin position="388"/>
        <end position="391"/>
    </location>
</feature>
<feature type="helix" evidence="9">
    <location>
        <begin position="394"/>
        <end position="396"/>
    </location>
</feature>
<feature type="strand" evidence="9">
    <location>
        <begin position="398"/>
        <end position="401"/>
    </location>
</feature>
<feature type="strand" evidence="9">
    <location>
        <begin position="403"/>
        <end position="411"/>
    </location>
</feature>
<feature type="helix" evidence="9">
    <location>
        <begin position="413"/>
        <end position="415"/>
    </location>
</feature>
<feature type="strand" evidence="9">
    <location>
        <begin position="416"/>
        <end position="423"/>
    </location>
</feature>
<feature type="strand" evidence="9">
    <location>
        <begin position="428"/>
        <end position="434"/>
    </location>
</feature>
<feature type="turn" evidence="9">
    <location>
        <begin position="435"/>
        <end position="438"/>
    </location>
</feature>
<feature type="strand" evidence="9">
    <location>
        <begin position="439"/>
        <end position="446"/>
    </location>
</feature>
<feature type="strand" evidence="9">
    <location>
        <begin position="457"/>
        <end position="460"/>
    </location>
</feature>
<feature type="strand" evidence="9">
    <location>
        <begin position="474"/>
        <end position="480"/>
    </location>
</feature>
<feature type="turn" evidence="9">
    <location>
        <begin position="481"/>
        <end position="484"/>
    </location>
</feature>
<feature type="strand" evidence="9">
    <location>
        <begin position="485"/>
        <end position="498"/>
    </location>
</feature>
<feature type="strand" evidence="9">
    <location>
        <begin position="503"/>
        <end position="505"/>
    </location>
</feature>
<feature type="strand" evidence="9">
    <location>
        <begin position="514"/>
        <end position="519"/>
    </location>
</feature>
<feature type="strand" evidence="9">
    <location>
        <begin position="521"/>
        <end position="529"/>
    </location>
</feature>
<feature type="strand" evidence="9">
    <location>
        <begin position="534"/>
        <end position="538"/>
    </location>
</feature>
<feature type="strand" evidence="9">
    <location>
        <begin position="544"/>
        <end position="546"/>
    </location>
</feature>
<feature type="strand" evidence="9">
    <location>
        <begin position="548"/>
        <end position="550"/>
    </location>
</feature>
<feature type="helix" evidence="9">
    <location>
        <begin position="551"/>
        <end position="562"/>
    </location>
</feature>
<feature type="strand" evidence="9">
    <location>
        <begin position="570"/>
        <end position="580"/>
    </location>
</feature>
<feature type="strand" evidence="9">
    <location>
        <begin position="583"/>
        <end position="590"/>
    </location>
</feature>
<feature type="turn" evidence="9">
    <location>
        <begin position="593"/>
        <end position="595"/>
    </location>
</feature>
<feature type="strand" evidence="9">
    <location>
        <begin position="597"/>
        <end position="602"/>
    </location>
</feature>
<feature type="helix" evidence="9">
    <location>
        <begin position="605"/>
        <end position="610"/>
    </location>
</feature>
<feature type="strand" evidence="9">
    <location>
        <begin position="617"/>
        <end position="622"/>
    </location>
</feature>
<feature type="strand" evidence="9">
    <location>
        <begin position="625"/>
        <end position="630"/>
    </location>
</feature>
<feature type="strand" evidence="9">
    <location>
        <begin position="635"/>
        <end position="643"/>
    </location>
</feature>
<feature type="helix" evidence="9">
    <location>
        <begin position="647"/>
        <end position="651"/>
    </location>
</feature>
<feature type="strand" evidence="9">
    <location>
        <begin position="653"/>
        <end position="658"/>
    </location>
</feature>
<feature type="helix" evidence="9">
    <location>
        <begin position="672"/>
        <end position="691"/>
    </location>
</feature>
<feature type="strand" evidence="9">
    <location>
        <begin position="699"/>
        <end position="702"/>
    </location>
</feature>
<feature type="helix" evidence="9">
    <location>
        <begin position="704"/>
        <end position="708"/>
    </location>
</feature>
<feature type="helix" evidence="9">
    <location>
        <begin position="709"/>
        <end position="714"/>
    </location>
</feature>
<feature type="helix" evidence="9">
    <location>
        <begin position="715"/>
        <end position="723"/>
    </location>
</feature>
<feature type="strand" evidence="9">
    <location>
        <begin position="730"/>
        <end position="732"/>
    </location>
</feature>
<feature type="helix" evidence="9">
    <location>
        <begin position="735"/>
        <end position="737"/>
    </location>
</feature>
<feature type="strand" evidence="9">
    <location>
        <begin position="738"/>
        <end position="742"/>
    </location>
</feature>
<feature type="strand" evidence="9">
    <location>
        <begin position="754"/>
        <end position="756"/>
    </location>
</feature>
<feature type="strand" evidence="9">
    <location>
        <begin position="761"/>
        <end position="769"/>
    </location>
</feature>
<feature type="helix" evidence="9">
    <location>
        <begin position="777"/>
        <end position="779"/>
    </location>
</feature>
<feature type="strand" evidence="9">
    <location>
        <begin position="782"/>
        <end position="785"/>
    </location>
</feature>
<feature type="helix" evidence="9">
    <location>
        <begin position="787"/>
        <end position="790"/>
    </location>
</feature>
<feature type="strand" evidence="9">
    <location>
        <begin position="793"/>
        <end position="799"/>
    </location>
</feature>
<feature type="helix" evidence="9">
    <location>
        <begin position="800"/>
        <end position="802"/>
    </location>
</feature>
<feature type="strand" evidence="9">
    <location>
        <begin position="804"/>
        <end position="812"/>
    </location>
</feature>
<feature type="turn" evidence="9">
    <location>
        <begin position="813"/>
        <end position="816"/>
    </location>
</feature>
<feature type="strand" evidence="9">
    <location>
        <begin position="817"/>
        <end position="825"/>
    </location>
</feature>
<feature type="helix" evidence="9">
    <location>
        <begin position="836"/>
        <end position="838"/>
    </location>
</feature>
<feature type="strand" evidence="9">
    <location>
        <begin position="841"/>
        <end position="849"/>
    </location>
</feature>
<feature type="turn" evidence="9">
    <location>
        <begin position="853"/>
        <end position="855"/>
    </location>
</feature>
<feature type="strand" evidence="9">
    <location>
        <begin position="857"/>
        <end position="860"/>
    </location>
</feature>
<feature type="strand" evidence="9">
    <location>
        <begin position="863"/>
        <end position="866"/>
    </location>
</feature>
<feature type="strand" evidence="9">
    <location>
        <begin position="868"/>
        <end position="877"/>
    </location>
</feature>
<feature type="strand" evidence="9">
    <location>
        <begin position="882"/>
        <end position="886"/>
    </location>
</feature>
<feature type="helix" evidence="9">
    <location>
        <begin position="888"/>
        <end position="898"/>
    </location>
</feature>
<feature type="strand" evidence="9">
    <location>
        <begin position="914"/>
        <end position="916"/>
    </location>
</feature>
<feature type="strand" evidence="9">
    <location>
        <begin position="925"/>
        <end position="933"/>
    </location>
</feature>
<feature type="strand" evidence="9">
    <location>
        <begin position="935"/>
        <end position="937"/>
    </location>
</feature>
<feature type="strand" evidence="9">
    <location>
        <begin position="942"/>
        <end position="952"/>
    </location>
</feature>
<feature type="helix" evidence="9">
    <location>
        <begin position="961"/>
        <end position="968"/>
    </location>
</feature>
<feature type="strand" evidence="9">
    <location>
        <begin position="978"/>
        <end position="980"/>
    </location>
</feature>
<feature type="helix" evidence="9">
    <location>
        <begin position="988"/>
        <end position="990"/>
    </location>
</feature>
<feature type="strand" evidence="9">
    <location>
        <begin position="1002"/>
        <end position="1004"/>
    </location>
</feature>
<feature type="strand" evidence="9">
    <location>
        <begin position="1018"/>
        <end position="1021"/>
    </location>
</feature>
<feature type="strand" evidence="9">
    <location>
        <begin position="1024"/>
        <end position="1032"/>
    </location>
</feature>
<feature type="turn" evidence="9">
    <location>
        <begin position="1034"/>
        <end position="1036"/>
    </location>
</feature>
<feature type="strand" evidence="9">
    <location>
        <begin position="1046"/>
        <end position="1053"/>
    </location>
</feature>
<feature type="helix" evidence="9">
    <location>
        <begin position="1059"/>
        <end position="1082"/>
    </location>
</feature>